<gene>
    <name evidence="1" type="primary">yqgF</name>
    <name type="ordered locus">BUAPTUC7_542</name>
</gene>
<comment type="function">
    <text evidence="1">Could be a nuclease involved in processing of the 5'-end of pre-16S rRNA.</text>
</comment>
<comment type="subcellular location">
    <subcellularLocation>
        <location evidence="1">Cytoplasm</location>
    </subcellularLocation>
</comment>
<comment type="similarity">
    <text evidence="1">Belongs to the YqgF nuclease family.</text>
</comment>
<protein>
    <recommendedName>
        <fullName evidence="1">Putative pre-16S rRNA nuclease</fullName>
        <ecNumber evidence="1">3.1.-.-</ecNumber>
    </recommendedName>
</protein>
<proteinExistence type="inferred from homology"/>
<sequence>MIVIAFDFGIKKIGVAVGENITKKGRPLSVLNAQNGCPNWQLVKNLIQYWQPQFIVVGLPLNINGTKQKITNKSEKFANLLKYKFNIVVKMHDERLTTVEAKSIIFKKNGFKGLKEEKIHSCAAVIILESWFNQY</sequence>
<reference key="1">
    <citation type="journal article" date="2009" name="Science">
        <title>The dynamics and time scale of ongoing genomic erosion in symbiotic bacteria.</title>
        <authorList>
            <person name="Moran N.A."/>
            <person name="McLaughlin H.J."/>
            <person name="Sorek R."/>
        </authorList>
    </citation>
    <scope>NUCLEOTIDE SEQUENCE [LARGE SCALE GENOMIC DNA]</scope>
    <source>
        <strain>Tuc7</strain>
    </source>
</reference>
<feature type="chain" id="PRO_1000147466" description="Putative pre-16S rRNA nuclease">
    <location>
        <begin position="1"/>
        <end position="135"/>
    </location>
</feature>
<name>YQGF_BUCAT</name>
<keyword id="KW-0963">Cytoplasm</keyword>
<keyword id="KW-0378">Hydrolase</keyword>
<keyword id="KW-0540">Nuclease</keyword>
<keyword id="KW-0690">Ribosome biogenesis</keyword>
<evidence type="ECO:0000255" key="1">
    <source>
        <dbReference type="HAMAP-Rule" id="MF_00651"/>
    </source>
</evidence>
<organism>
    <name type="scientific">Buchnera aphidicola subsp. Acyrthosiphon pisum (strain Tuc7)</name>
    <dbReference type="NCBI Taxonomy" id="561501"/>
    <lineage>
        <taxon>Bacteria</taxon>
        <taxon>Pseudomonadati</taxon>
        <taxon>Pseudomonadota</taxon>
        <taxon>Gammaproteobacteria</taxon>
        <taxon>Enterobacterales</taxon>
        <taxon>Erwiniaceae</taxon>
        <taxon>Buchnera</taxon>
    </lineage>
</organism>
<accession>B8D872</accession>
<dbReference type="EC" id="3.1.-.-" evidence="1"/>
<dbReference type="EMBL" id="CP001158">
    <property type="protein sequence ID" value="ACL30337.1"/>
    <property type="molecule type" value="Genomic_DNA"/>
</dbReference>
<dbReference type="SMR" id="B8D872"/>
<dbReference type="KEGG" id="bau:BUAPTUC7_542"/>
<dbReference type="HOGENOM" id="CLU_098240_3_0_6"/>
<dbReference type="GO" id="GO:0005829">
    <property type="term" value="C:cytosol"/>
    <property type="evidence" value="ECO:0007669"/>
    <property type="project" value="TreeGrafter"/>
</dbReference>
<dbReference type="GO" id="GO:0004518">
    <property type="term" value="F:nuclease activity"/>
    <property type="evidence" value="ECO:0007669"/>
    <property type="project" value="UniProtKB-KW"/>
</dbReference>
<dbReference type="GO" id="GO:0000967">
    <property type="term" value="P:rRNA 5'-end processing"/>
    <property type="evidence" value="ECO:0007669"/>
    <property type="project" value="UniProtKB-UniRule"/>
</dbReference>
<dbReference type="CDD" id="cd16964">
    <property type="entry name" value="YqgF"/>
    <property type="match status" value="1"/>
</dbReference>
<dbReference type="Gene3D" id="3.30.420.140">
    <property type="entry name" value="YqgF/RNase H-like domain"/>
    <property type="match status" value="1"/>
</dbReference>
<dbReference type="HAMAP" id="MF_00651">
    <property type="entry name" value="Nuclease_YqgF"/>
    <property type="match status" value="1"/>
</dbReference>
<dbReference type="InterPro" id="IPR012337">
    <property type="entry name" value="RNaseH-like_sf"/>
</dbReference>
<dbReference type="InterPro" id="IPR005227">
    <property type="entry name" value="YqgF"/>
</dbReference>
<dbReference type="InterPro" id="IPR006641">
    <property type="entry name" value="YqgF/RNaseH-like_dom"/>
</dbReference>
<dbReference type="InterPro" id="IPR037027">
    <property type="entry name" value="YqgF/RNaseH-like_dom_sf"/>
</dbReference>
<dbReference type="NCBIfam" id="TIGR00250">
    <property type="entry name" value="RNAse_H_YqgF"/>
    <property type="match status" value="1"/>
</dbReference>
<dbReference type="PANTHER" id="PTHR33317">
    <property type="entry name" value="POLYNUCLEOTIDYL TRANSFERASE, RIBONUCLEASE H-LIKE SUPERFAMILY PROTEIN"/>
    <property type="match status" value="1"/>
</dbReference>
<dbReference type="PANTHER" id="PTHR33317:SF4">
    <property type="entry name" value="POLYNUCLEOTIDYL TRANSFERASE, RIBONUCLEASE H-LIKE SUPERFAMILY PROTEIN"/>
    <property type="match status" value="1"/>
</dbReference>
<dbReference type="Pfam" id="PF03652">
    <property type="entry name" value="RuvX"/>
    <property type="match status" value="1"/>
</dbReference>
<dbReference type="SMART" id="SM00732">
    <property type="entry name" value="YqgFc"/>
    <property type="match status" value="1"/>
</dbReference>
<dbReference type="SUPFAM" id="SSF53098">
    <property type="entry name" value="Ribonuclease H-like"/>
    <property type="match status" value="1"/>
</dbReference>